<feature type="peptide" id="PRO_0000378831" description="Periviscerokinin-3" evidence="2">
    <location>
        <begin position="1"/>
        <end position="11"/>
    </location>
</feature>
<feature type="modified residue" description="Valine amide" evidence="2">
    <location>
        <position position="11"/>
    </location>
</feature>
<protein>
    <recommendedName>
        <fullName evidence="3">Periviscerokinin-3</fullName>
        <shortName evidence="3">EubPo-PVK-3</shortName>
    </recommendedName>
</protein>
<keyword id="KW-0027">Amidation</keyword>
<keyword id="KW-0903">Direct protein sequencing</keyword>
<keyword id="KW-0527">Neuropeptide</keyword>
<keyword id="KW-0964">Secreted</keyword>
<proteinExistence type="evidence at protein level"/>
<comment type="function">
    <text evidence="4">Mediates visceral muscle contractile activity (myotropic activity).</text>
</comment>
<comment type="subcellular location">
    <subcellularLocation>
        <location evidence="4">Secreted</location>
    </subcellularLocation>
</comment>
<comment type="similarity">
    <text evidence="1">Belongs to the periviscerokinin family.</text>
</comment>
<name>PVK3_EUBPO</name>
<accession>P85622</accession>
<dbReference type="GO" id="GO:0005576">
    <property type="term" value="C:extracellular region"/>
    <property type="evidence" value="ECO:0007669"/>
    <property type="project" value="UniProtKB-SubCell"/>
</dbReference>
<dbReference type="GO" id="GO:0007218">
    <property type="term" value="P:neuropeptide signaling pathway"/>
    <property type="evidence" value="ECO:0007669"/>
    <property type="project" value="UniProtKB-KW"/>
</dbReference>
<dbReference type="InterPro" id="IPR013231">
    <property type="entry name" value="Periviscerokinin"/>
</dbReference>
<dbReference type="Pfam" id="PF08259">
    <property type="entry name" value="Periviscerokin"/>
    <property type="match status" value="1"/>
</dbReference>
<organism>
    <name type="scientific">Eublaberus posticus</name>
    <name type="common">Golden cockroach</name>
    <dbReference type="NCBI Taxonomy" id="36951"/>
    <lineage>
        <taxon>Eukaryota</taxon>
        <taxon>Metazoa</taxon>
        <taxon>Ecdysozoa</taxon>
        <taxon>Arthropoda</taxon>
        <taxon>Hexapoda</taxon>
        <taxon>Insecta</taxon>
        <taxon>Pterygota</taxon>
        <taxon>Neoptera</taxon>
        <taxon>Polyneoptera</taxon>
        <taxon>Dictyoptera</taxon>
        <taxon>Blattodea</taxon>
        <taxon>Blaberoidea</taxon>
        <taxon>Blaberidae</taxon>
        <taxon>Blaberinae</taxon>
        <taxon>Eublaberus</taxon>
    </lineage>
</organism>
<reference evidence="4" key="1">
    <citation type="journal article" date="2009" name="BMC Evol. Biol.">
        <title>A proteomic approach for studying insect phylogeny: CAPA peptides of ancient insect taxa (Dictyoptera, Blattoptera) as a test case.</title>
        <authorList>
            <person name="Roth S."/>
            <person name="Fromm B."/>
            <person name="Gaede G."/>
            <person name="Predel R."/>
        </authorList>
    </citation>
    <scope>PROTEIN SEQUENCE</scope>
    <scope>AMIDATION AT VAL-11</scope>
    <source>
        <tissue evidence="2">Abdominal perisympathetic organs</tissue>
    </source>
</reference>
<evidence type="ECO:0000255" key="1"/>
<evidence type="ECO:0000269" key="2">
    <source>
    </source>
</evidence>
<evidence type="ECO:0000303" key="3">
    <source>
    </source>
</evidence>
<evidence type="ECO:0000305" key="4"/>
<sequence>GSSGMIPFPRV</sequence>